<protein>
    <recommendedName>
        <fullName evidence="1">Cobalt transport protein CbiM</fullName>
    </recommendedName>
    <alternativeName>
        <fullName evidence="1">Energy-coupling factor transporter probable substrate-capture protein CbiM</fullName>
        <shortName evidence="1">ECF transporter S component CbiM</shortName>
    </alternativeName>
</protein>
<dbReference type="EMBL" id="CP000922">
    <property type="protein sequence ID" value="ACJ34543.1"/>
    <property type="molecule type" value="Genomic_DNA"/>
</dbReference>
<dbReference type="RefSeq" id="WP_012575721.1">
    <property type="nucleotide sequence ID" value="NC_011567.1"/>
</dbReference>
<dbReference type="SMR" id="B7GLU2"/>
<dbReference type="STRING" id="491915.Aflv_2184"/>
<dbReference type="GeneID" id="7038437"/>
<dbReference type="KEGG" id="afl:Aflv_2184"/>
<dbReference type="PATRIC" id="fig|491915.6.peg.2243"/>
<dbReference type="eggNOG" id="COG0310">
    <property type="taxonomic scope" value="Bacteria"/>
</dbReference>
<dbReference type="HOGENOM" id="CLU_052508_3_0_9"/>
<dbReference type="UniPathway" id="UPA00148"/>
<dbReference type="Proteomes" id="UP000000742">
    <property type="component" value="Chromosome"/>
</dbReference>
<dbReference type="GO" id="GO:0043190">
    <property type="term" value="C:ATP-binding cassette (ABC) transporter complex"/>
    <property type="evidence" value="ECO:0007669"/>
    <property type="project" value="InterPro"/>
</dbReference>
<dbReference type="GO" id="GO:0015087">
    <property type="term" value="F:cobalt ion transmembrane transporter activity"/>
    <property type="evidence" value="ECO:0007669"/>
    <property type="project" value="UniProtKB-UniRule"/>
</dbReference>
<dbReference type="GO" id="GO:0009236">
    <property type="term" value="P:cobalamin biosynthetic process"/>
    <property type="evidence" value="ECO:0007669"/>
    <property type="project" value="UniProtKB-UniRule"/>
</dbReference>
<dbReference type="FunFam" id="1.10.1760.20:FF:000001">
    <property type="entry name" value="Cobalt transport protein CbiM"/>
    <property type="match status" value="1"/>
</dbReference>
<dbReference type="Gene3D" id="1.10.1760.20">
    <property type="match status" value="1"/>
</dbReference>
<dbReference type="HAMAP" id="MF_01462">
    <property type="entry name" value="CbiM"/>
    <property type="match status" value="1"/>
</dbReference>
<dbReference type="InterPro" id="IPR018024">
    <property type="entry name" value="CbiM"/>
</dbReference>
<dbReference type="InterPro" id="IPR002751">
    <property type="entry name" value="CbiM/NikMN"/>
</dbReference>
<dbReference type="NCBIfam" id="TIGR00123">
    <property type="entry name" value="cbiM"/>
    <property type="match status" value="1"/>
</dbReference>
<dbReference type="NCBIfam" id="NF006184">
    <property type="entry name" value="PRK08319.1"/>
    <property type="match status" value="1"/>
</dbReference>
<dbReference type="PANTHER" id="PTHR43627">
    <property type="match status" value="1"/>
</dbReference>
<dbReference type="PANTHER" id="PTHR43627:SF1">
    <property type="entry name" value="COBALT TRANSPORT PROTEIN CBIM"/>
    <property type="match status" value="1"/>
</dbReference>
<dbReference type="Pfam" id="PF01891">
    <property type="entry name" value="CbiM"/>
    <property type="match status" value="1"/>
</dbReference>
<feature type="signal peptide" evidence="1">
    <location>
        <begin position="1"/>
        <end position="27"/>
    </location>
</feature>
<feature type="chain" id="PRO_0000411135" description="Cobalt transport protein CbiM">
    <location>
        <begin position="28"/>
        <end position="250"/>
    </location>
</feature>
<feature type="transmembrane region" description="Helical" evidence="1">
    <location>
        <begin position="33"/>
        <end position="53"/>
    </location>
</feature>
<feature type="transmembrane region" description="Helical" evidence="1">
    <location>
        <begin position="70"/>
        <end position="90"/>
    </location>
</feature>
<feature type="transmembrane region" description="Helical" evidence="1">
    <location>
        <begin position="102"/>
        <end position="122"/>
    </location>
</feature>
<feature type="transmembrane region" description="Helical" evidence="1">
    <location>
        <begin position="134"/>
        <end position="154"/>
    </location>
</feature>
<feature type="transmembrane region" description="Helical" evidence="1">
    <location>
        <begin position="168"/>
        <end position="188"/>
    </location>
</feature>
<feature type="transmembrane region" description="Helical" evidence="1">
    <location>
        <begin position="208"/>
        <end position="228"/>
    </location>
</feature>
<accession>B7GLU2</accession>
<gene>
    <name evidence="1" type="primary">cbiM</name>
    <name type="ordered locus">Aflv_2184</name>
</gene>
<proteinExistence type="inferred from homology"/>
<sequence>MKKPLFFIASACVTIYILFALSPSVYAMHIMEGFLPWQWALVWWLLFLPFFLVGMRNVARLMRQRPEVKLLLALATAFTFVLSALKIPSVTGSSSHPTGTGLGALLFGPFVMTVIGTAVLLFQALLLAHGGVTTLGANAFSMAVVGPLVAYVLFSLCKKFGVSTRVSVFLAAMMADLATYVMTSIQLALAFPDATSGVWGAFLKFASIFAVTQIPLAITEGLLTVVVWNFLHTYSKRELTILQQKGATIE</sequence>
<name>CBIM_ANOFW</name>
<keyword id="KW-1003">Cell membrane</keyword>
<keyword id="KW-0169">Cobalamin biosynthesis</keyword>
<keyword id="KW-0170">Cobalt</keyword>
<keyword id="KW-0171">Cobalt transport</keyword>
<keyword id="KW-0406">Ion transport</keyword>
<keyword id="KW-0472">Membrane</keyword>
<keyword id="KW-0732">Signal</keyword>
<keyword id="KW-0812">Transmembrane</keyword>
<keyword id="KW-1133">Transmembrane helix</keyword>
<keyword id="KW-0813">Transport</keyword>
<reference key="1">
    <citation type="journal article" date="2008" name="Genome Biol.">
        <title>Encapsulated in silica: genome, proteome and physiology of the thermophilic bacterium Anoxybacillus flavithermus WK1.</title>
        <authorList>
            <person name="Saw J.H."/>
            <person name="Mountain B.W."/>
            <person name="Feng L."/>
            <person name="Omelchenko M.V."/>
            <person name="Hou S."/>
            <person name="Saito J.A."/>
            <person name="Stott M.B."/>
            <person name="Li D."/>
            <person name="Zhao G."/>
            <person name="Wu J."/>
            <person name="Galperin M.Y."/>
            <person name="Koonin E.V."/>
            <person name="Makarova K.S."/>
            <person name="Wolf Y.I."/>
            <person name="Rigden D.J."/>
            <person name="Dunfield P.F."/>
            <person name="Wang L."/>
            <person name="Alam M."/>
        </authorList>
    </citation>
    <scope>NUCLEOTIDE SEQUENCE [LARGE SCALE GENOMIC DNA]</scope>
    <source>
        <strain>DSM 21510 / WK1</strain>
    </source>
</reference>
<comment type="function">
    <text evidence="1">Part of the energy-coupling factor (ECF) transporter complex CbiMNOQ involved in cobalt import.</text>
</comment>
<comment type="pathway">
    <text evidence="1">Cofactor biosynthesis; adenosylcobalamin biosynthesis.</text>
</comment>
<comment type="subunit">
    <text evidence="1">Forms an energy-coupling factor (ECF) transporter complex composed of an ATP-binding protein (A component, CbiO), a transmembrane protein (T component, CbiQ) and 2 possible substrate-capture proteins (S components, CbiM and CbiN) of unknown stoichimetry.</text>
</comment>
<comment type="subcellular location">
    <subcellularLocation>
        <location evidence="1">Cell membrane</location>
        <topology evidence="1">Multi-pass membrane protein</topology>
    </subcellularLocation>
</comment>
<comment type="similarity">
    <text evidence="1">Belongs to the CbiM family.</text>
</comment>
<evidence type="ECO:0000255" key="1">
    <source>
        <dbReference type="HAMAP-Rule" id="MF_01462"/>
    </source>
</evidence>
<organism>
    <name type="scientific">Anoxybacillus flavithermus (strain DSM 21510 / WK1)</name>
    <dbReference type="NCBI Taxonomy" id="491915"/>
    <lineage>
        <taxon>Bacteria</taxon>
        <taxon>Bacillati</taxon>
        <taxon>Bacillota</taxon>
        <taxon>Bacilli</taxon>
        <taxon>Bacillales</taxon>
        <taxon>Anoxybacillaceae</taxon>
        <taxon>Anoxybacillus</taxon>
    </lineage>
</organism>